<keyword id="KW-0472">Membrane</keyword>
<keyword id="KW-0496">Mitochondrion</keyword>
<keyword id="KW-0999">Mitochondrion inner membrane</keyword>
<keyword id="KW-0653">Protein transport</keyword>
<keyword id="KW-1185">Reference proteome</keyword>
<keyword id="KW-0811">Translocation</keyword>
<keyword id="KW-0812">Transmembrane</keyword>
<keyword id="KW-1133">Transmembrane helix</keyword>
<keyword id="KW-0813">Transport</keyword>
<proteinExistence type="inferred from homology"/>
<sequence>MEYNRQPCPIRIVEDCGCAFMMGTMGGSLFQYLKGFRNAPSGLRRGLHGGIESVRLRTPAIAGSFAIWGATFSTVDCVMVSYRQREDSWNAIVSGAATGGILAARNGIRAMANSAFVGCLVLAMLEGAGAAVATIYASDGGVKAEESLITVDQQMQRPQWETSVADSNLTGAELERVLDECRAYRAHNKMQQPMRSDAVEGKELGQLMKPMHSLVDLVKLAEIV</sequence>
<organism>
    <name type="scientific">Drosophila melanogaster</name>
    <name type="common">Fruit fly</name>
    <dbReference type="NCBI Taxonomy" id="7227"/>
    <lineage>
        <taxon>Eukaryota</taxon>
        <taxon>Metazoa</taxon>
        <taxon>Ecdysozoa</taxon>
        <taxon>Arthropoda</taxon>
        <taxon>Hexapoda</taxon>
        <taxon>Insecta</taxon>
        <taxon>Pterygota</taxon>
        <taxon>Neoptera</taxon>
        <taxon>Endopterygota</taxon>
        <taxon>Diptera</taxon>
        <taxon>Brachycera</taxon>
        <taxon>Muscomorpha</taxon>
        <taxon>Ephydroidea</taxon>
        <taxon>Drosophilidae</taxon>
        <taxon>Drosophila</taxon>
        <taxon>Sophophora</taxon>
    </lineage>
</organism>
<comment type="function">
    <text evidence="1">Essential component of the TIM23 complex, a complex that mediates the translocation of transit peptide-containing proteins across the mitochondrial inner membrane.</text>
</comment>
<comment type="subunit">
    <text evidence="1">Component of the TIM23 complex at least composed of Tim23, Tim17 (Tim17a1, Tim17a2 or Tim17b1) and a Tim50. The complex interacts with the Tim44 component of the PAM complex (By similarity).</text>
</comment>
<comment type="subcellular location">
    <subcellularLocation>
        <location evidence="1">Mitochondrion inner membrane</location>
        <topology evidence="1">Multi-pass membrane protein</topology>
    </subcellularLocation>
</comment>
<comment type="similarity">
    <text evidence="3">Belongs to the Tim17/Tim22/Tim23 family.</text>
</comment>
<gene>
    <name type="primary">Tim17a2</name>
    <name type="ORF">CG14666</name>
</gene>
<dbReference type="EMBL" id="AE014297">
    <property type="protein sequence ID" value="AAF52051.1"/>
    <property type="molecule type" value="Genomic_DNA"/>
</dbReference>
<dbReference type="RefSeq" id="NP_649524.1">
    <property type="nucleotide sequence ID" value="NM_141267.3"/>
</dbReference>
<dbReference type="SMR" id="Q9VN97"/>
<dbReference type="BioGRID" id="65844">
    <property type="interactions" value="1"/>
</dbReference>
<dbReference type="DIP" id="DIP-18041N"/>
<dbReference type="FunCoup" id="Q9VN97">
    <property type="interactions" value="18"/>
</dbReference>
<dbReference type="IntAct" id="Q9VN97">
    <property type="interactions" value="1"/>
</dbReference>
<dbReference type="STRING" id="7227.FBpp0078462"/>
<dbReference type="PaxDb" id="7227-FBpp0078462"/>
<dbReference type="EnsemblMetazoa" id="FBtr0078820">
    <property type="protein sequence ID" value="FBpp0078462"/>
    <property type="gene ID" value="FBgn0037307"/>
</dbReference>
<dbReference type="GeneID" id="40632"/>
<dbReference type="KEGG" id="dme:Dmel_CG14666"/>
<dbReference type="UCSC" id="CG14666-RA">
    <property type="organism name" value="d. melanogaster"/>
</dbReference>
<dbReference type="AGR" id="FB:FBgn0037307"/>
<dbReference type="CTD" id="40632"/>
<dbReference type="FlyBase" id="FBgn0037307">
    <property type="gene designation" value="Tim17a2"/>
</dbReference>
<dbReference type="VEuPathDB" id="VectorBase:FBgn0037307"/>
<dbReference type="eggNOG" id="KOG1652">
    <property type="taxonomic scope" value="Eukaryota"/>
</dbReference>
<dbReference type="GeneTree" id="ENSGT00390000017780"/>
<dbReference type="HOGENOM" id="CLU_087811_0_1_1"/>
<dbReference type="InParanoid" id="Q9VN97"/>
<dbReference type="OMA" id="PQRPQWE"/>
<dbReference type="OrthoDB" id="2261329at2759"/>
<dbReference type="PhylomeDB" id="Q9VN97"/>
<dbReference type="Reactome" id="R-DME-1268020">
    <property type="pathway name" value="Mitochondrial protein import"/>
</dbReference>
<dbReference type="BioGRID-ORCS" id="40632">
    <property type="hits" value="0 hits in 3 CRISPR screens"/>
</dbReference>
<dbReference type="GenomeRNAi" id="40632"/>
<dbReference type="PRO" id="PR:Q9VN97"/>
<dbReference type="Proteomes" id="UP000000803">
    <property type="component" value="Chromosome 3R"/>
</dbReference>
<dbReference type="Bgee" id="FBgn0037307">
    <property type="expression patterns" value="Expressed in adult Malpighian tubule principal cell of initial segment in Malpighian tubule and 28 other cell types or tissues"/>
</dbReference>
<dbReference type="GO" id="GO:0005744">
    <property type="term" value="C:TIM23 mitochondrial import inner membrane translocase complex"/>
    <property type="evidence" value="ECO:0000318"/>
    <property type="project" value="GO_Central"/>
</dbReference>
<dbReference type="GO" id="GO:0030150">
    <property type="term" value="P:protein import into mitochondrial matrix"/>
    <property type="evidence" value="ECO:0000318"/>
    <property type="project" value="GO_Central"/>
</dbReference>
<dbReference type="PANTHER" id="PTHR10485:SF0">
    <property type="entry name" value="AT05822P-RELATED"/>
    <property type="match status" value="1"/>
</dbReference>
<dbReference type="PANTHER" id="PTHR10485">
    <property type="entry name" value="MITOCHONDRIAL IMPORT INNER MEMBRANE TRANSLOCASE SUBUNIT TIM-17"/>
    <property type="match status" value="1"/>
</dbReference>
<dbReference type="Pfam" id="PF02466">
    <property type="entry name" value="Tim17"/>
    <property type="match status" value="1"/>
</dbReference>
<accession>Q9VN97</accession>
<feature type="chain" id="PRO_0000210292" description="Probable mitochondrial import inner membrane translocase subunit Tim17 4">
    <location>
        <begin position="1"/>
        <end position="224"/>
    </location>
</feature>
<feature type="transmembrane region" description="Helical" evidence="2">
    <location>
        <begin position="16"/>
        <end position="36"/>
    </location>
</feature>
<feature type="transmembrane region" description="Helical" evidence="2">
    <location>
        <begin position="60"/>
        <end position="80"/>
    </location>
</feature>
<feature type="transmembrane region" description="Helical" evidence="2">
    <location>
        <begin position="115"/>
        <end position="135"/>
    </location>
</feature>
<protein>
    <recommendedName>
        <fullName>Probable mitochondrial import inner membrane translocase subunit Tim17 4</fullName>
    </recommendedName>
</protein>
<evidence type="ECO:0000250" key="1"/>
<evidence type="ECO:0000255" key="2"/>
<evidence type="ECO:0000305" key="3"/>
<reference key="1">
    <citation type="journal article" date="2000" name="Science">
        <title>The genome sequence of Drosophila melanogaster.</title>
        <authorList>
            <person name="Adams M.D."/>
            <person name="Celniker S.E."/>
            <person name="Holt R.A."/>
            <person name="Evans C.A."/>
            <person name="Gocayne J.D."/>
            <person name="Amanatides P.G."/>
            <person name="Scherer S.E."/>
            <person name="Li P.W."/>
            <person name="Hoskins R.A."/>
            <person name="Galle R.F."/>
            <person name="George R.A."/>
            <person name="Lewis S.E."/>
            <person name="Richards S."/>
            <person name="Ashburner M."/>
            <person name="Henderson S.N."/>
            <person name="Sutton G.G."/>
            <person name="Wortman J.R."/>
            <person name="Yandell M.D."/>
            <person name="Zhang Q."/>
            <person name="Chen L.X."/>
            <person name="Brandon R.C."/>
            <person name="Rogers Y.-H.C."/>
            <person name="Blazej R.G."/>
            <person name="Champe M."/>
            <person name="Pfeiffer B.D."/>
            <person name="Wan K.H."/>
            <person name="Doyle C."/>
            <person name="Baxter E.G."/>
            <person name="Helt G."/>
            <person name="Nelson C.R."/>
            <person name="Miklos G.L.G."/>
            <person name="Abril J.F."/>
            <person name="Agbayani A."/>
            <person name="An H.-J."/>
            <person name="Andrews-Pfannkoch C."/>
            <person name="Baldwin D."/>
            <person name="Ballew R.M."/>
            <person name="Basu A."/>
            <person name="Baxendale J."/>
            <person name="Bayraktaroglu L."/>
            <person name="Beasley E.M."/>
            <person name="Beeson K.Y."/>
            <person name="Benos P.V."/>
            <person name="Berman B.P."/>
            <person name="Bhandari D."/>
            <person name="Bolshakov S."/>
            <person name="Borkova D."/>
            <person name="Botchan M.R."/>
            <person name="Bouck J."/>
            <person name="Brokstein P."/>
            <person name="Brottier P."/>
            <person name="Burtis K.C."/>
            <person name="Busam D.A."/>
            <person name="Butler H."/>
            <person name="Cadieu E."/>
            <person name="Center A."/>
            <person name="Chandra I."/>
            <person name="Cherry J.M."/>
            <person name="Cawley S."/>
            <person name="Dahlke C."/>
            <person name="Davenport L.B."/>
            <person name="Davies P."/>
            <person name="de Pablos B."/>
            <person name="Delcher A."/>
            <person name="Deng Z."/>
            <person name="Mays A.D."/>
            <person name="Dew I."/>
            <person name="Dietz S.M."/>
            <person name="Dodson K."/>
            <person name="Doup L.E."/>
            <person name="Downes M."/>
            <person name="Dugan-Rocha S."/>
            <person name="Dunkov B.C."/>
            <person name="Dunn P."/>
            <person name="Durbin K.J."/>
            <person name="Evangelista C.C."/>
            <person name="Ferraz C."/>
            <person name="Ferriera S."/>
            <person name="Fleischmann W."/>
            <person name="Fosler C."/>
            <person name="Gabrielian A.E."/>
            <person name="Garg N.S."/>
            <person name="Gelbart W.M."/>
            <person name="Glasser K."/>
            <person name="Glodek A."/>
            <person name="Gong F."/>
            <person name="Gorrell J.H."/>
            <person name="Gu Z."/>
            <person name="Guan P."/>
            <person name="Harris M."/>
            <person name="Harris N.L."/>
            <person name="Harvey D.A."/>
            <person name="Heiman T.J."/>
            <person name="Hernandez J.R."/>
            <person name="Houck J."/>
            <person name="Hostin D."/>
            <person name="Houston K.A."/>
            <person name="Howland T.J."/>
            <person name="Wei M.-H."/>
            <person name="Ibegwam C."/>
            <person name="Jalali M."/>
            <person name="Kalush F."/>
            <person name="Karpen G.H."/>
            <person name="Ke Z."/>
            <person name="Kennison J.A."/>
            <person name="Ketchum K.A."/>
            <person name="Kimmel B.E."/>
            <person name="Kodira C.D."/>
            <person name="Kraft C.L."/>
            <person name="Kravitz S."/>
            <person name="Kulp D."/>
            <person name="Lai Z."/>
            <person name="Lasko P."/>
            <person name="Lei Y."/>
            <person name="Levitsky A.A."/>
            <person name="Li J.H."/>
            <person name="Li Z."/>
            <person name="Liang Y."/>
            <person name="Lin X."/>
            <person name="Liu X."/>
            <person name="Mattei B."/>
            <person name="McIntosh T.C."/>
            <person name="McLeod M.P."/>
            <person name="McPherson D."/>
            <person name="Merkulov G."/>
            <person name="Milshina N.V."/>
            <person name="Mobarry C."/>
            <person name="Morris J."/>
            <person name="Moshrefi A."/>
            <person name="Mount S.M."/>
            <person name="Moy M."/>
            <person name="Murphy B."/>
            <person name="Murphy L."/>
            <person name="Muzny D.M."/>
            <person name="Nelson D.L."/>
            <person name="Nelson D.R."/>
            <person name="Nelson K.A."/>
            <person name="Nixon K."/>
            <person name="Nusskern D.R."/>
            <person name="Pacleb J.M."/>
            <person name="Palazzolo M."/>
            <person name="Pittman G.S."/>
            <person name="Pan S."/>
            <person name="Pollard J."/>
            <person name="Puri V."/>
            <person name="Reese M.G."/>
            <person name="Reinert K."/>
            <person name="Remington K."/>
            <person name="Saunders R.D.C."/>
            <person name="Scheeler F."/>
            <person name="Shen H."/>
            <person name="Shue B.C."/>
            <person name="Siden-Kiamos I."/>
            <person name="Simpson M."/>
            <person name="Skupski M.P."/>
            <person name="Smith T.J."/>
            <person name="Spier E."/>
            <person name="Spradling A.C."/>
            <person name="Stapleton M."/>
            <person name="Strong R."/>
            <person name="Sun E."/>
            <person name="Svirskas R."/>
            <person name="Tector C."/>
            <person name="Turner R."/>
            <person name="Venter E."/>
            <person name="Wang A.H."/>
            <person name="Wang X."/>
            <person name="Wang Z.-Y."/>
            <person name="Wassarman D.A."/>
            <person name="Weinstock G.M."/>
            <person name="Weissenbach J."/>
            <person name="Williams S.M."/>
            <person name="Woodage T."/>
            <person name="Worley K.C."/>
            <person name="Wu D."/>
            <person name="Yang S."/>
            <person name="Yao Q.A."/>
            <person name="Ye J."/>
            <person name="Yeh R.-F."/>
            <person name="Zaveri J.S."/>
            <person name="Zhan M."/>
            <person name="Zhang G."/>
            <person name="Zhao Q."/>
            <person name="Zheng L."/>
            <person name="Zheng X.H."/>
            <person name="Zhong F.N."/>
            <person name="Zhong W."/>
            <person name="Zhou X."/>
            <person name="Zhu S.C."/>
            <person name="Zhu X."/>
            <person name="Smith H.O."/>
            <person name="Gibbs R.A."/>
            <person name="Myers E.W."/>
            <person name="Rubin G.M."/>
            <person name="Venter J.C."/>
        </authorList>
    </citation>
    <scope>NUCLEOTIDE SEQUENCE [LARGE SCALE GENOMIC DNA]</scope>
    <source>
        <strain>Berkeley</strain>
    </source>
</reference>
<reference key="2">
    <citation type="journal article" date="2002" name="Genome Biol.">
        <title>Annotation of the Drosophila melanogaster euchromatic genome: a systematic review.</title>
        <authorList>
            <person name="Misra S."/>
            <person name="Crosby M.A."/>
            <person name="Mungall C.J."/>
            <person name="Matthews B.B."/>
            <person name="Campbell K.S."/>
            <person name="Hradecky P."/>
            <person name="Huang Y."/>
            <person name="Kaminker J.S."/>
            <person name="Millburn G.H."/>
            <person name="Prochnik S.E."/>
            <person name="Smith C.D."/>
            <person name="Tupy J.L."/>
            <person name="Whitfield E.J."/>
            <person name="Bayraktaroglu L."/>
            <person name="Berman B.P."/>
            <person name="Bettencourt B.R."/>
            <person name="Celniker S.E."/>
            <person name="de Grey A.D.N.J."/>
            <person name="Drysdale R.A."/>
            <person name="Harris N.L."/>
            <person name="Richter J."/>
            <person name="Russo S."/>
            <person name="Schroeder A.J."/>
            <person name="Shu S.Q."/>
            <person name="Stapleton M."/>
            <person name="Yamada C."/>
            <person name="Ashburner M."/>
            <person name="Gelbart W.M."/>
            <person name="Rubin G.M."/>
            <person name="Lewis S.E."/>
        </authorList>
    </citation>
    <scope>GENOME REANNOTATION</scope>
    <source>
        <strain>Berkeley</strain>
    </source>
</reference>
<name>TI17D_DROME</name>